<protein>
    <recommendedName>
        <fullName>H(+)/Cl(-) exchange transporter 5</fullName>
    </recommendedName>
    <alternativeName>
        <fullName>Chloride channel protein 5</fullName>
        <shortName>ClC-5</shortName>
    </alternativeName>
    <alternativeName>
        <fullName>Chloride transporter ClC-5</fullName>
    </alternativeName>
</protein>
<name>CLCN5_PIG</name>
<accession>Q9GKE7</accession>
<accession>A0A287BE85</accession>
<organism>
    <name type="scientific">Sus scrofa</name>
    <name type="common">Pig</name>
    <dbReference type="NCBI Taxonomy" id="9823"/>
    <lineage>
        <taxon>Eukaryota</taxon>
        <taxon>Metazoa</taxon>
        <taxon>Chordata</taxon>
        <taxon>Craniata</taxon>
        <taxon>Vertebrata</taxon>
        <taxon>Euteleostomi</taxon>
        <taxon>Mammalia</taxon>
        <taxon>Eutheria</taxon>
        <taxon>Laurasiatheria</taxon>
        <taxon>Artiodactyla</taxon>
        <taxon>Suina</taxon>
        <taxon>Suidae</taxon>
        <taxon>Sus</taxon>
    </lineage>
</organism>
<keyword id="KW-0025">Alternative splicing</keyword>
<keyword id="KW-0050">Antiport</keyword>
<keyword id="KW-0067">ATP-binding</keyword>
<keyword id="KW-0129">CBS domain</keyword>
<keyword id="KW-1003">Cell membrane</keyword>
<keyword id="KW-0868">Chloride</keyword>
<keyword id="KW-0967">Endosome</keyword>
<keyword id="KW-0333">Golgi apparatus</keyword>
<keyword id="KW-0406">Ion transport</keyword>
<keyword id="KW-0472">Membrane</keyword>
<keyword id="KW-0547">Nucleotide-binding</keyword>
<keyword id="KW-1185">Reference proteome</keyword>
<keyword id="KW-0677">Repeat</keyword>
<keyword id="KW-0812">Transmembrane</keyword>
<keyword id="KW-1133">Transmembrane helix</keyword>
<keyword id="KW-0813">Transport</keyword>
<keyword id="KW-0832">Ubl conjugation</keyword>
<gene>
    <name type="primary">CLCN5</name>
</gene>
<feature type="chain" id="PRO_0000305928" description="H(+)/Cl(-) exchange transporter 5">
    <location>
        <begin position="1"/>
        <end position="816"/>
    </location>
</feature>
<feature type="topological domain" description="Cytoplasmic" evidence="1">
    <location>
        <begin position="1"/>
        <end position="124"/>
    </location>
</feature>
<feature type="transmembrane region" description="Helical" evidence="1">
    <location>
        <begin position="125"/>
        <end position="162"/>
    </location>
</feature>
<feature type="transmembrane region" description="Helical" evidence="1">
    <location>
        <begin position="208"/>
        <end position="231"/>
    </location>
</feature>
<feature type="intramembrane region" description="Helical" evidence="1">
    <location>
        <begin position="240"/>
        <end position="247"/>
    </location>
</feature>
<feature type="transmembrane region" description="Helical" evidence="1">
    <location>
        <begin position="256"/>
        <end position="275"/>
    </location>
</feature>
<feature type="transmembrane region" description="Helical" evidence="1">
    <location>
        <begin position="281"/>
        <end position="300"/>
    </location>
</feature>
<feature type="intramembrane region" description="Helical" evidence="1">
    <location>
        <begin position="312"/>
        <end position="324"/>
    </location>
</feature>
<feature type="intramembrane region" description="Helical" evidence="1">
    <location>
        <begin position="328"/>
        <end position="336"/>
    </location>
</feature>
<feature type="transmembrane region" description="Helical" evidence="1">
    <location>
        <begin position="348"/>
        <end position="366"/>
    </location>
</feature>
<feature type="transmembrane region" description="Helical" evidence="1">
    <location>
        <begin position="389"/>
        <end position="414"/>
    </location>
</feature>
<feature type="transmembrane region" description="Helical" evidence="1">
    <location>
        <begin position="422"/>
        <end position="442"/>
    </location>
</feature>
<feature type="transmembrane region" description="Helical" evidence="1">
    <location>
        <begin position="498"/>
        <end position="518"/>
    </location>
</feature>
<feature type="transmembrane region" description="Helical" evidence="1">
    <location>
        <begin position="523"/>
        <end position="542"/>
    </location>
</feature>
<feature type="intramembrane region" description="Helical" evidence="1">
    <location>
        <begin position="570"/>
        <end position="584"/>
    </location>
</feature>
<feature type="intramembrane region" description="Note=Loop between two helices" evidence="1">
    <location>
        <begin position="585"/>
        <end position="587"/>
    </location>
</feature>
<feature type="intramembrane region" description="Helical" evidence="1">
    <location>
        <begin position="588"/>
        <end position="599"/>
    </location>
</feature>
<feature type="intramembrane region" description="Note=Loop between two helices" evidence="1">
    <location>
        <begin position="600"/>
        <end position="604"/>
    </location>
</feature>
<feature type="transmembrane region" description="Helical" evidence="1">
    <location>
        <begin position="605"/>
        <end position="622"/>
    </location>
</feature>
<feature type="topological domain" description="Cytoplasmic" evidence="1">
    <location>
        <begin position="623"/>
        <end position="816"/>
    </location>
</feature>
<feature type="domain" description="CBS 1" evidence="3">
    <location>
        <begin position="656"/>
        <end position="720"/>
    </location>
</feature>
<feature type="domain" description="CBS 2" evidence="3">
    <location>
        <begin position="752"/>
        <end position="812"/>
    </location>
</feature>
<feature type="region of interest" description="Disordered" evidence="4">
    <location>
        <begin position="1"/>
        <end position="28"/>
    </location>
</feature>
<feature type="short sequence motif" description="Selectivity filter part_1" evidence="1">
    <location>
        <begin position="237"/>
        <end position="241"/>
    </location>
</feature>
<feature type="short sequence motif" description="Selectivity filter part_2" evidence="1">
    <location>
        <begin position="279"/>
        <end position="283"/>
    </location>
</feature>
<feature type="short sequence motif" description="Selectivity filter part_3" evidence="1">
    <location>
        <begin position="523"/>
        <end position="527"/>
    </location>
</feature>
<feature type="compositionally biased region" description="Low complexity" evidence="4">
    <location>
        <begin position="12"/>
        <end position="25"/>
    </location>
</feature>
<feature type="binding site" evidence="1">
    <location>
        <position position="238"/>
    </location>
    <ligand>
        <name>chloride</name>
        <dbReference type="ChEBI" id="CHEBI:17996"/>
    </ligand>
</feature>
<feature type="binding site" evidence="1">
    <location>
        <position position="525"/>
    </location>
    <ligand>
        <name>chloride</name>
        <dbReference type="ChEBI" id="CHEBI:17996"/>
    </ligand>
</feature>
<feature type="binding site" evidence="1">
    <location>
        <position position="628"/>
    </location>
    <ligand>
        <name>chloride</name>
        <dbReference type="ChEBI" id="CHEBI:17996"/>
    </ligand>
</feature>
<feature type="binding site" evidence="2">
    <location>
        <position position="666"/>
    </location>
    <ligand>
        <name>ATP</name>
        <dbReference type="ChEBI" id="CHEBI:30616"/>
    </ligand>
</feature>
<feature type="binding site" evidence="2">
    <location>
        <begin position="687"/>
        <end position="689"/>
    </location>
    <ligand>
        <name>ATP</name>
        <dbReference type="ChEBI" id="CHEBI:30616"/>
    </ligand>
</feature>
<feature type="binding site" evidence="2">
    <location>
        <begin position="794"/>
        <end position="797"/>
    </location>
    <ligand>
        <name>ATP</name>
        <dbReference type="ChEBI" id="CHEBI:30616"/>
    </ligand>
</feature>
<feature type="site" description="Mediates proton transfer from the outer aqueous phase to the interior of the protein; involved in linking H(+) and Cl(-) transport" evidence="1">
    <location>
        <position position="281"/>
    </location>
</feature>
<feature type="site" description="Mediates proton transfer from the protein to the inner aqueous phase" evidence="1">
    <location>
        <position position="338"/>
    </location>
</feature>
<feature type="splice variant" id="VSP_060656" description="In isoform 2." evidence="6">
    <location>
        <begin position="1"/>
        <end position="70"/>
    </location>
</feature>
<comment type="function">
    <text evidence="2 5 6">Proton-coupled chloride transporter. Functions as antiport system and exchanges chloride ions against protons (PubMed:10978325). Important for normal acidification of the endosome lumen. May play an important role in renal tubular function (By similarity). The CLC channel family contains both chloride channels and proton-coupled anion transporters that exchange chloride or another anion for protons. The absence of conserved gating glutamate residues is typical for family members that function as channels (Probable).</text>
</comment>
<comment type="catalytic activity">
    <reaction evidence="2">
        <text>2 chloride(in) + H(+)(out) = 2 chloride(out) + H(+)(in)</text>
        <dbReference type="Rhea" id="RHEA:29567"/>
        <dbReference type="ChEBI" id="CHEBI:15378"/>
        <dbReference type="ChEBI" id="CHEBI:17996"/>
    </reaction>
</comment>
<comment type="subunit">
    <text evidence="2">Interacts with NEDD4 and NEDD4L.</text>
</comment>
<comment type="subcellular location">
    <subcellularLocation>
        <location evidence="5">Golgi apparatus membrane</location>
        <topology evidence="5">Multi-pass membrane protein</topology>
    </subcellularLocation>
    <subcellularLocation>
        <location evidence="5">Endosome membrane</location>
        <topology evidence="5">Multi-pass membrane protein</topology>
    </subcellularLocation>
    <subcellularLocation>
        <location evidence="2">Cell membrane</location>
        <topology evidence="2">Multi-pass membrane protein</topology>
    </subcellularLocation>
</comment>
<comment type="alternative products">
    <event type="alternative splicing"/>
    <isoform>
        <id>Q9GKE7-1</id>
        <name>1</name>
        <sequence type="displayed"/>
    </isoform>
    <isoform>
        <id>Q9GKE7-2</id>
        <name>2</name>
        <sequence type="described" ref="VSP_060656"/>
    </isoform>
</comment>
<comment type="PTM">
    <text evidence="2">Ubiquitinated by NEDD4L in the presence of albumin; which promotes endocytosis and proteasomal degradation.</text>
</comment>
<comment type="similarity">
    <text evidence="6">Belongs to the chloride channel (TC 2.A.49) family. ClC-5/CLCN5 subfamily.</text>
</comment>
<proteinExistence type="evidence at transcript level"/>
<reference key="1">
    <citation type="journal article" date="2000" name="J. Biol. Chem.">
        <title>Molecular cloning and characterization of an intracellular chloride channel in the proximal tubule cell line, LLC-PK1.</title>
        <authorList>
            <person name="Dowland L.K."/>
            <person name="Luyckx V.A."/>
            <person name="Enck A.H."/>
            <person name="Leclercq B."/>
            <person name="Yu A.S.L."/>
        </authorList>
    </citation>
    <scope>NUCLEOTIDE SEQUENCE [MRNA] (ISOFORM 2)</scope>
    <scope>FUNCTION</scope>
    <scope>SUBCELLULAR LOCATION</scope>
</reference>
<reference evidence="7" key="2">
    <citation type="journal article" date="2019" name="PeerJ">
        <title>Genes of the pig, Sus scrofa, reconstructed with EvidentialGene.</title>
        <authorList>
            <person name="Gilbert D.G."/>
        </authorList>
    </citation>
    <scope>NUCLEOTIDE SEQUENCE [LARGE SCALE MRNA]</scope>
</reference>
<reference evidence="8" key="3">
    <citation type="submission" date="2009-11" db="EMBL/GenBank/DDBJ databases">
        <authorList>
            <consortium name="Porcine genome sequencing project"/>
        </authorList>
    </citation>
    <scope>NUCLEOTIDE SEQUENCE [LARGE SCALE GENOMIC DNA]</scope>
</reference>
<dbReference type="EMBL" id="AF274055">
    <property type="protein sequence ID" value="AAG29104.1"/>
    <property type="molecule type" value="mRNA"/>
</dbReference>
<dbReference type="EMBL" id="AEMK02000113">
    <property type="status" value="NOT_ANNOTATED_CDS"/>
    <property type="molecule type" value="Genomic_DNA"/>
</dbReference>
<dbReference type="EMBL" id="DQIR01030313">
    <property type="protein sequence ID" value="HCZ85788.1"/>
    <property type="molecule type" value="Transcribed_RNA"/>
</dbReference>
<dbReference type="RefSeq" id="NP_999304.2">
    <molecule id="Q9GKE7-1"/>
    <property type="nucleotide sequence ID" value="NM_214139.2"/>
</dbReference>
<dbReference type="SMR" id="Q9GKE7"/>
<dbReference type="FunCoup" id="Q9GKE7">
    <property type="interactions" value="429"/>
</dbReference>
<dbReference type="STRING" id="9823.ENSSSCP00000042280"/>
<dbReference type="TCDB" id="2.A.49.2.2">
    <property type="family name" value="the chloride carrier/channel (clc) family"/>
</dbReference>
<dbReference type="PaxDb" id="9823-ENSSSCP00000027416"/>
<dbReference type="Ensembl" id="ENSSSCT00000064514.3">
    <molecule id="Q9GKE7-1"/>
    <property type="protein sequence ID" value="ENSSSCP00000042280.1"/>
    <property type="gene ID" value="ENSSSCG00000023026.4"/>
</dbReference>
<dbReference type="Ensembl" id="ENSSSCT00025100441.1">
    <molecule id="Q9GKE7-1"/>
    <property type="protein sequence ID" value="ENSSSCP00025044337.1"/>
    <property type="gene ID" value="ENSSSCG00025072959.1"/>
</dbReference>
<dbReference type="Ensembl" id="ENSSSCT00030005600.1">
    <molecule id="Q9GKE7-1"/>
    <property type="protein sequence ID" value="ENSSSCP00030002301.1"/>
    <property type="gene ID" value="ENSSSCG00030004195.1"/>
</dbReference>
<dbReference type="Ensembl" id="ENSSSCT00035075084.1">
    <molecule id="Q9GKE7-1"/>
    <property type="protein sequence ID" value="ENSSSCP00035030521.1"/>
    <property type="gene ID" value="ENSSSCG00035056248.1"/>
</dbReference>
<dbReference type="Ensembl" id="ENSSSCT00045055218.1">
    <molecule id="Q9GKE7-1"/>
    <property type="protein sequence ID" value="ENSSSCP00045038497.1"/>
    <property type="gene ID" value="ENSSSCG00045032335.1"/>
</dbReference>
<dbReference type="Ensembl" id="ENSSSCT00050109186.1">
    <molecule id="Q9GKE7-1"/>
    <property type="protein sequence ID" value="ENSSSCP00050048637.1"/>
    <property type="gene ID" value="ENSSSCG00050079073.1"/>
</dbReference>
<dbReference type="Ensembl" id="ENSSSCT00055004384.1">
    <molecule id="Q9GKE7-1"/>
    <property type="protein sequence ID" value="ENSSSCP00055003367.1"/>
    <property type="gene ID" value="ENSSSCG00055002299.1"/>
</dbReference>
<dbReference type="Ensembl" id="ENSSSCT00060036495.1">
    <molecule id="Q9GKE7-1"/>
    <property type="protein sequence ID" value="ENSSSCP00060015534.1"/>
    <property type="gene ID" value="ENSSSCG00060026931.1"/>
</dbReference>
<dbReference type="Ensembl" id="ENSSSCT00070050001.1">
    <molecule id="Q9GKE7-1"/>
    <property type="protein sequence ID" value="ENSSSCP00070042232.1"/>
    <property type="gene ID" value="ENSSSCG00070025014.1"/>
</dbReference>
<dbReference type="Ensembl" id="ENSSSCT00070050003.1">
    <molecule id="Q9GKE7-1"/>
    <property type="protein sequence ID" value="ENSSSCP00070042234.1"/>
    <property type="gene ID" value="ENSSSCG00070025014.1"/>
</dbReference>
<dbReference type="Ensembl" id="ENSSSCT00105048985">
    <molecule id="Q9GKE7-1"/>
    <property type="protein sequence ID" value="ENSSSCP00105034463"/>
    <property type="gene ID" value="ENSSSCG00105025776"/>
</dbReference>
<dbReference type="Ensembl" id="ENSSSCT00110035651">
    <molecule id="Q9GKE7-1"/>
    <property type="protein sequence ID" value="ENSSSCP00110024276"/>
    <property type="gene ID" value="ENSSSCG00110018660"/>
</dbReference>
<dbReference type="Ensembl" id="ENSSSCT00115038517">
    <molecule id="Q9GKE7-1"/>
    <property type="protein sequence ID" value="ENSSSCP00115036344"/>
    <property type="gene ID" value="ENSSSCG00115021751"/>
</dbReference>
<dbReference type="Ensembl" id="ENSSSCT00130041224">
    <molecule id="Q9GKE7-1"/>
    <property type="protein sequence ID" value="ENSSSCP00130029041"/>
    <property type="gene ID" value="ENSSSCG00130021257"/>
</dbReference>
<dbReference type="GeneID" id="397263"/>
<dbReference type="KEGG" id="ssc:397263"/>
<dbReference type="CTD" id="1184"/>
<dbReference type="eggNOG" id="KOG0475">
    <property type="taxonomic scope" value="Eukaryota"/>
</dbReference>
<dbReference type="GeneTree" id="ENSGT00940000153763"/>
<dbReference type="HOGENOM" id="CLU_003181_2_1_1"/>
<dbReference type="InParanoid" id="Q9GKE7"/>
<dbReference type="OrthoDB" id="44789at2759"/>
<dbReference type="TreeFam" id="TF313867"/>
<dbReference type="Reactome" id="R-SSC-2672351">
    <property type="pathway name" value="Stimuli-sensing channels"/>
</dbReference>
<dbReference type="Proteomes" id="UP000008227">
    <property type="component" value="Chromosome X"/>
</dbReference>
<dbReference type="Proteomes" id="UP000314985">
    <property type="component" value="Unassembled WGS sequence"/>
</dbReference>
<dbReference type="Proteomes" id="UP000694570">
    <property type="component" value="Unplaced"/>
</dbReference>
<dbReference type="Proteomes" id="UP000694571">
    <property type="component" value="Unplaced"/>
</dbReference>
<dbReference type="Proteomes" id="UP000694720">
    <property type="component" value="Unplaced"/>
</dbReference>
<dbReference type="Proteomes" id="UP000694722">
    <property type="component" value="Unplaced"/>
</dbReference>
<dbReference type="Proteomes" id="UP000694723">
    <property type="component" value="Unplaced"/>
</dbReference>
<dbReference type="Proteomes" id="UP000694724">
    <property type="component" value="Unplaced"/>
</dbReference>
<dbReference type="Proteomes" id="UP000694725">
    <property type="component" value="Unplaced"/>
</dbReference>
<dbReference type="Proteomes" id="UP000694726">
    <property type="component" value="Unplaced"/>
</dbReference>
<dbReference type="Proteomes" id="UP000694727">
    <property type="component" value="Unplaced"/>
</dbReference>
<dbReference type="Proteomes" id="UP000694728">
    <property type="component" value="Unplaced"/>
</dbReference>
<dbReference type="Bgee" id="ENSSSCG00000023026">
    <property type="expression patterns" value="Expressed in metanephros cortex and 40 other cell types or tissues"/>
</dbReference>
<dbReference type="ExpressionAtlas" id="Q9GKE7">
    <property type="expression patterns" value="baseline"/>
</dbReference>
<dbReference type="GO" id="GO:0045177">
    <property type="term" value="C:apical part of cell"/>
    <property type="evidence" value="ECO:0007669"/>
    <property type="project" value="Ensembl"/>
</dbReference>
<dbReference type="GO" id="GO:0005829">
    <property type="term" value="C:cytosol"/>
    <property type="evidence" value="ECO:0007669"/>
    <property type="project" value="Ensembl"/>
</dbReference>
<dbReference type="GO" id="GO:0005769">
    <property type="term" value="C:early endosome"/>
    <property type="evidence" value="ECO:0000318"/>
    <property type="project" value="GO_Central"/>
</dbReference>
<dbReference type="GO" id="GO:0010008">
    <property type="term" value="C:endosome membrane"/>
    <property type="evidence" value="ECO:0007669"/>
    <property type="project" value="UniProtKB-SubCell"/>
</dbReference>
<dbReference type="GO" id="GO:0005794">
    <property type="term" value="C:Golgi apparatus"/>
    <property type="evidence" value="ECO:0000318"/>
    <property type="project" value="GO_Central"/>
</dbReference>
<dbReference type="GO" id="GO:0000139">
    <property type="term" value="C:Golgi membrane"/>
    <property type="evidence" value="ECO:0007669"/>
    <property type="project" value="UniProtKB-SubCell"/>
</dbReference>
<dbReference type="GO" id="GO:0005886">
    <property type="term" value="C:plasma membrane"/>
    <property type="evidence" value="ECO:0000318"/>
    <property type="project" value="GO_Central"/>
</dbReference>
<dbReference type="GO" id="GO:0008021">
    <property type="term" value="C:synaptic vesicle"/>
    <property type="evidence" value="ECO:0000318"/>
    <property type="project" value="GO_Central"/>
</dbReference>
<dbReference type="GO" id="GO:0015297">
    <property type="term" value="F:antiporter activity"/>
    <property type="evidence" value="ECO:0007669"/>
    <property type="project" value="UniProtKB-KW"/>
</dbReference>
<dbReference type="GO" id="GO:0005524">
    <property type="term" value="F:ATP binding"/>
    <property type="evidence" value="ECO:0007669"/>
    <property type="project" value="UniProtKB-KW"/>
</dbReference>
<dbReference type="GO" id="GO:0042802">
    <property type="term" value="F:identical protein binding"/>
    <property type="evidence" value="ECO:0007669"/>
    <property type="project" value="Ensembl"/>
</dbReference>
<dbReference type="GO" id="GO:0005247">
    <property type="term" value="F:voltage-gated chloride channel activity"/>
    <property type="evidence" value="ECO:0000318"/>
    <property type="project" value="GO_Central"/>
</dbReference>
<dbReference type="GO" id="GO:0006897">
    <property type="term" value="P:endocytosis"/>
    <property type="evidence" value="ECO:0007669"/>
    <property type="project" value="Ensembl"/>
</dbReference>
<dbReference type="GO" id="GO:0003014">
    <property type="term" value="P:renal system process"/>
    <property type="evidence" value="ECO:0007669"/>
    <property type="project" value="Ensembl"/>
</dbReference>
<dbReference type="CDD" id="cd04591">
    <property type="entry name" value="CBS_pair_voltage-gated_CLC_euk_bac"/>
    <property type="match status" value="1"/>
</dbReference>
<dbReference type="CDD" id="cd03684">
    <property type="entry name" value="ClC_3_like"/>
    <property type="match status" value="1"/>
</dbReference>
<dbReference type="FunFam" id="3.10.580.20:FF:000001">
    <property type="entry name" value="Chloride channel protein"/>
    <property type="match status" value="1"/>
</dbReference>
<dbReference type="FunFam" id="3.90.1280.20:FF:000001">
    <property type="entry name" value="Chloride channel protein"/>
    <property type="match status" value="1"/>
</dbReference>
<dbReference type="FunFam" id="3.90.1280.20:FF:000003">
    <property type="entry name" value="Chloride channel protein"/>
    <property type="match status" value="1"/>
</dbReference>
<dbReference type="Gene3D" id="3.10.580.20">
    <property type="match status" value="1"/>
</dbReference>
<dbReference type="Gene3D" id="3.90.1280.20">
    <property type="match status" value="1"/>
</dbReference>
<dbReference type="Gene3D" id="1.10.3080.10">
    <property type="entry name" value="Clc chloride channel"/>
    <property type="match status" value="1"/>
</dbReference>
<dbReference type="InterPro" id="IPR000644">
    <property type="entry name" value="CBS_dom"/>
</dbReference>
<dbReference type="InterPro" id="IPR046342">
    <property type="entry name" value="CBS_dom_sf"/>
</dbReference>
<dbReference type="InterPro" id="IPR014743">
    <property type="entry name" value="Cl-channel_core"/>
</dbReference>
<dbReference type="InterPro" id="IPR002247">
    <property type="entry name" value="Cl_channel-5"/>
</dbReference>
<dbReference type="InterPro" id="IPR001807">
    <property type="entry name" value="ClC"/>
</dbReference>
<dbReference type="PANTHER" id="PTHR45711">
    <property type="entry name" value="CHLORIDE CHANNEL PROTEIN"/>
    <property type="match status" value="1"/>
</dbReference>
<dbReference type="PANTHER" id="PTHR45711:SF7">
    <property type="entry name" value="H(+)_CL(-) EXCHANGE TRANSPORTER 5"/>
    <property type="match status" value="1"/>
</dbReference>
<dbReference type="Pfam" id="PF00571">
    <property type="entry name" value="CBS"/>
    <property type="match status" value="2"/>
</dbReference>
<dbReference type="Pfam" id="PF00654">
    <property type="entry name" value="Voltage_CLC"/>
    <property type="match status" value="1"/>
</dbReference>
<dbReference type="PRINTS" id="PR00762">
    <property type="entry name" value="CLCHANNEL"/>
</dbReference>
<dbReference type="PRINTS" id="PR01116">
    <property type="entry name" value="CLCHANNEL5"/>
</dbReference>
<dbReference type="SMART" id="SM00116">
    <property type="entry name" value="CBS"/>
    <property type="match status" value="2"/>
</dbReference>
<dbReference type="SUPFAM" id="SSF54631">
    <property type="entry name" value="CBS-domain pair"/>
    <property type="match status" value="1"/>
</dbReference>
<dbReference type="SUPFAM" id="SSF81340">
    <property type="entry name" value="Clc chloride channel"/>
    <property type="match status" value="1"/>
</dbReference>
<dbReference type="PROSITE" id="PS51371">
    <property type="entry name" value="CBS"/>
    <property type="match status" value="2"/>
</dbReference>
<evidence type="ECO:0000250" key="1"/>
<evidence type="ECO:0000250" key="2">
    <source>
        <dbReference type="UniProtKB" id="P51795"/>
    </source>
</evidence>
<evidence type="ECO:0000255" key="3">
    <source>
        <dbReference type="PROSITE-ProRule" id="PRU00703"/>
    </source>
</evidence>
<evidence type="ECO:0000256" key="4">
    <source>
        <dbReference type="SAM" id="MobiDB-lite"/>
    </source>
</evidence>
<evidence type="ECO:0000269" key="5">
    <source>
    </source>
</evidence>
<evidence type="ECO:0000305" key="6"/>
<evidence type="ECO:0000312" key="7">
    <source>
        <dbReference type="EMBL" id="HCZ85788.1"/>
    </source>
</evidence>
<evidence type="ECO:0000312" key="8">
    <source>
        <dbReference type="Proteomes" id="UP000008227"/>
    </source>
</evidence>
<sequence length="816" mass="90802">MAMWQGAMDNRGFQQGSFNSFQSSSSDEDLMDIPGTAMDFSMRDDVPPLDGEIEEDKSYNGGGLGSSYRMMDFLEEPIPGVGTYDDFNTIDWVREKSRDRDRHREITNKSKESTWALIHSVSDAFSGWLLMLLIGLLSGSLAGLIDISAHWMTDLKEGICTEGLWFNHEHCCWNSKHVTFKDRDKCPEWNSWSQLIISADEGAFAYIVNYFMYVLWALLFAFLAVSLVKVFAPYACGSGIPEIKTILSGFIIRGYLGKWTLIIKTITLVLAVSSGLSLGKEGPLVHVACCCGNILCHCFNKYRKNEAKRREVLSAAAAAGVSVAFGAPIGGVLFSLEEVSYYFPLKTLWRSFFAALVAAFTLRSINPFGNSRLVLFYVEFHTPWHLFELVPFILLGIFGGLWGALFIRTNIAWCRKRKTTQLGKYPVIEVLVVTAITAILAFPNEYTRMSTSELISELFNDCGLLDSSKLCDYENRFNTSKAAELPDRPAGAGVYSAMWQLALTLILKIVITIFTFGMKIPSGLFIPSMAVGAIAGRLLGVGMEQLAYYHHDWAIFNSWCSQGADCITPGLYAMVGAAACLGGVTRMTVSLVVIMFELTGGLEYIVPLMAAAMTSKWVADALGREGIYDAHIRLNGYPFLEAKEEFAHKTLAMDVMKPRRNDPSLTVLTQDSMTVEDVETIISETTYSGFPVVVSRESQRLVGFVLRRDLIISIENARKKQDGVVSTSIIYFTEHSPPMPPYTPPTLKLRNILDLSPFTVTDLTPMEIVVDIFRKLGLRQCLVTHNGRLLGIITKKDVLKHIAQMANQDPDSILFN</sequence>